<keyword id="KW-0217">Developmental protein</keyword>
<keyword id="KW-0238">DNA-binding</keyword>
<keyword id="KW-0306">Gastrulation</keyword>
<keyword id="KW-0539">Nucleus</keyword>
<keyword id="KW-1185">Reference proteome</keyword>
<keyword id="KW-0804">Transcription</keyword>
<keyword id="KW-0805">Transcription regulation</keyword>
<reference evidence="9 10" key="1">
    <citation type="journal article" date="2004" name="Proc. Natl. Acad. Sci. U.S.A.">
        <title>Specialized and redundant roles of TBP and a vertebrate-specific TBP paralog in embryonic gene regulation in Xenopus.</title>
        <authorList>
            <person name="Jallow Z."/>
            <person name="Jacobi U.G."/>
            <person name="Weeks D.L."/>
            <person name="Dawid I.B."/>
            <person name="Veenstra G.J.C."/>
        </authorList>
    </citation>
    <scope>NUCLEOTIDE SEQUENCE [MRNA]</scope>
    <scope>FUNCTION</scope>
    <scope>SUBCELLULAR LOCATION</scope>
    <scope>DEVELOPMENTAL STAGE</scope>
</reference>
<reference evidence="9" key="2">
    <citation type="journal article" date="2001" name="Gene">
        <title>The NIEHS Xenopus maternal EST project: interim analysis of the first 13,879 ESTs from unfertilized eggs.</title>
        <authorList>
            <person name="Blackshear P.J."/>
            <person name="Lai W.S."/>
            <person name="Thorn J.M."/>
            <person name="Kennington E.A."/>
            <person name="Staffa N.G. Jr."/>
            <person name="Moore D.T."/>
            <person name="Bouffard G.G."/>
            <person name="Beckstrom-Sternberg S.M."/>
            <person name="Touchman J.W."/>
            <person name="Bonaldo M.F."/>
            <person name="Soares M.B."/>
        </authorList>
    </citation>
    <scope>NUCLEOTIDE SEQUENCE [MRNA] OF 1-223</scope>
</reference>
<reference evidence="9" key="3">
    <citation type="submission" date="2001-08" db="EMBL/GenBank/DDBJ databases">
        <title>WashU Xenopus EST project, 1999.</title>
        <authorList>
            <person name="Clifton S."/>
            <person name="Johnson S.L."/>
            <person name="Blumberg B."/>
            <person name="Song J."/>
            <person name="Hillier L."/>
            <person name="Pape D."/>
            <person name="Martin J."/>
            <person name="Wylie T."/>
            <person name="Underwood K."/>
            <person name="Theising B."/>
            <person name="Bowers Y."/>
            <person name="Person B."/>
            <person name="Gibbons M."/>
            <person name="Harvey N."/>
            <person name="Ritter E."/>
            <person name="Jackson Y."/>
            <person name="McCann R."/>
            <person name="Waterston R."/>
            <person name="Wilson R."/>
        </authorList>
    </citation>
    <scope>NUCLEOTIDE SEQUENCE [LARGE SCALE MRNA] OF 135-320</scope>
</reference>
<reference evidence="9 11" key="4">
    <citation type="journal article" date="2003" name="Proc. Natl. Acad. Sci. U.S.A.">
        <title>TRF3, a TATA-box-binding protein-related factor, is vertebrate-specific and widely expressed.</title>
        <authorList>
            <person name="Persengiev S.P."/>
            <person name="Zhu X."/>
            <person name="Dixit B.L."/>
            <person name="Maston G.A."/>
            <person name="Kittler E.L.W."/>
            <person name="Green M.R."/>
        </authorList>
    </citation>
    <scope>IDENTIFICATION</scope>
</reference>
<reference evidence="9" key="5">
    <citation type="journal article" date="2004" name="Curr. Biol.">
        <title>TBP2, a vertebrate-specific member of the TBP family, is required in embryonic development of zebrafish.</title>
        <authorList>
            <person name="Bartfai R."/>
            <person name="Balduf C."/>
            <person name="Hilton T."/>
            <person name="Rathmann Y."/>
            <person name="Hadzhiev Y."/>
            <person name="Tora L."/>
            <person name="Orban L."/>
            <person name="Mueller F."/>
        </authorList>
    </citation>
    <scope>TISSUE SPECIFICITY</scope>
</reference>
<reference evidence="9" key="6">
    <citation type="journal article" date="2006" name="Gene Expr. Patterns">
        <title>Developmental and cell type-specific regulation of core promoter transcription factors in germ cells of frogs and mice.</title>
        <authorList>
            <person name="Xiao L."/>
            <person name="Kim M."/>
            <person name="DeJong J."/>
        </authorList>
    </citation>
    <scope>TISSUE SPECIFICITY</scope>
    <scope>DEVELOPMENTAL STAGE</scope>
</reference>
<reference evidence="9" key="7">
    <citation type="journal article" date="2007" name="EMBO J.">
        <title>TBP paralogs accommodate metazoan- and vertebrate-specific developmental gene regulation.</title>
        <authorList>
            <person name="Jacobi U.G."/>
            <person name="Akkers R.C."/>
            <person name="Pierson E.S."/>
            <person name="Weeks D.L."/>
            <person name="Dagle J.M."/>
            <person name="Veenstra G.J.C."/>
        </authorList>
    </citation>
    <scope>FUNCTION</scope>
</reference>
<accession>Q5UE94</accession>
<accession>Q6IM79</accession>
<organism>
    <name type="scientific">Xenopus laevis</name>
    <name type="common">African clawed frog</name>
    <dbReference type="NCBI Taxonomy" id="8355"/>
    <lineage>
        <taxon>Eukaryota</taxon>
        <taxon>Metazoa</taxon>
        <taxon>Chordata</taxon>
        <taxon>Craniata</taxon>
        <taxon>Vertebrata</taxon>
        <taxon>Euteleostomi</taxon>
        <taxon>Amphibia</taxon>
        <taxon>Batrachia</taxon>
        <taxon>Anura</taxon>
        <taxon>Pipoidea</taxon>
        <taxon>Pipidae</taxon>
        <taxon>Xenopodinae</taxon>
        <taxon>Xenopus</taxon>
        <taxon>Xenopus</taxon>
    </lineage>
</organism>
<dbReference type="EMBL" id="AY753184">
    <property type="protein sequence ID" value="AAV34742.1"/>
    <property type="molecule type" value="mRNA"/>
</dbReference>
<dbReference type="EMBL" id="AW633235">
    <property type="status" value="NOT_ANNOTATED_CDS"/>
    <property type="molecule type" value="mRNA"/>
</dbReference>
<dbReference type="EMBL" id="AW638001">
    <property type="status" value="NOT_ANNOTATED_CDS"/>
    <property type="molecule type" value="mRNA"/>
</dbReference>
<dbReference type="EMBL" id="BI349806">
    <property type="status" value="NOT_ANNOTATED_CDS"/>
    <property type="molecule type" value="mRNA"/>
</dbReference>
<dbReference type="EMBL" id="BI443085">
    <property type="status" value="NOT_ANNOTATED_CDS"/>
    <property type="molecule type" value="mRNA"/>
</dbReference>
<dbReference type="EMBL" id="BK001774">
    <property type="protein sequence ID" value="DAA02137.1"/>
    <property type="molecule type" value="mRNA"/>
</dbReference>
<dbReference type="RefSeq" id="NP_001080921.1">
    <property type="nucleotide sequence ID" value="NM_001087452.2"/>
</dbReference>
<dbReference type="SMR" id="Q5UE94"/>
<dbReference type="GeneID" id="387333"/>
<dbReference type="KEGG" id="xla:387333"/>
<dbReference type="AGR" id="Xenbase:XB-GENE-876147"/>
<dbReference type="CTD" id="387333"/>
<dbReference type="Xenbase" id="XB-GENE-876147">
    <property type="gene designation" value="tbpl2.L"/>
</dbReference>
<dbReference type="OMA" id="FTPSECR"/>
<dbReference type="OrthoDB" id="2127950at2759"/>
<dbReference type="Proteomes" id="UP000186698">
    <property type="component" value="Chromosome 8L"/>
</dbReference>
<dbReference type="Bgee" id="387333">
    <property type="expression patterns" value="Expressed in egg cell and 6 other cell types or tissues"/>
</dbReference>
<dbReference type="GO" id="GO:0005634">
    <property type="term" value="C:nucleus"/>
    <property type="evidence" value="ECO:0000314"/>
    <property type="project" value="UniProtKB"/>
</dbReference>
<dbReference type="GO" id="GO:0003677">
    <property type="term" value="F:DNA binding"/>
    <property type="evidence" value="ECO:0000314"/>
    <property type="project" value="UniProtKB"/>
</dbReference>
<dbReference type="GO" id="GO:0003700">
    <property type="term" value="F:DNA-binding transcription factor activity"/>
    <property type="evidence" value="ECO:0000314"/>
    <property type="project" value="UniProtKB"/>
</dbReference>
<dbReference type="GO" id="GO:0016251">
    <property type="term" value="F:RNA polymerase II general transcription initiation factor activity"/>
    <property type="evidence" value="ECO:0000318"/>
    <property type="project" value="GO_Central"/>
</dbReference>
<dbReference type="GO" id="GO:0006351">
    <property type="term" value="P:DNA-templated transcription"/>
    <property type="evidence" value="ECO:0000314"/>
    <property type="project" value="UniProtKB"/>
</dbReference>
<dbReference type="GO" id="GO:0006352">
    <property type="term" value="P:DNA-templated transcription initiation"/>
    <property type="evidence" value="ECO:0000318"/>
    <property type="project" value="GO_Central"/>
</dbReference>
<dbReference type="GO" id="GO:0009792">
    <property type="term" value="P:embryo development ending in birth or egg hatching"/>
    <property type="evidence" value="ECO:0000315"/>
    <property type="project" value="UniProtKB"/>
</dbReference>
<dbReference type="GO" id="GO:0007369">
    <property type="term" value="P:gastrulation"/>
    <property type="evidence" value="ECO:0000315"/>
    <property type="project" value="UniProtKB"/>
</dbReference>
<dbReference type="GO" id="GO:0006366">
    <property type="term" value="P:transcription by RNA polymerase II"/>
    <property type="evidence" value="ECO:0000315"/>
    <property type="project" value="UniProtKB"/>
</dbReference>
<dbReference type="CDD" id="cd04516">
    <property type="entry name" value="TBP_eukaryotes"/>
    <property type="match status" value="1"/>
</dbReference>
<dbReference type="FunFam" id="3.30.310.10:FF:000001">
    <property type="entry name" value="TATA-box-binding protein 2"/>
    <property type="match status" value="1"/>
</dbReference>
<dbReference type="FunFam" id="3.30.310.10:FF:000002">
    <property type="entry name" value="TATA-box-binding protein 2"/>
    <property type="match status" value="1"/>
</dbReference>
<dbReference type="Gene3D" id="3.30.310.10">
    <property type="entry name" value="TATA-Binding Protein"/>
    <property type="match status" value="2"/>
</dbReference>
<dbReference type="HAMAP" id="MF_00408">
    <property type="entry name" value="TATA_bind_prot_arch"/>
    <property type="match status" value="1"/>
</dbReference>
<dbReference type="InterPro" id="IPR000814">
    <property type="entry name" value="TBP"/>
</dbReference>
<dbReference type="InterPro" id="IPR030491">
    <property type="entry name" value="TBP_CS"/>
</dbReference>
<dbReference type="InterPro" id="IPR012295">
    <property type="entry name" value="TBP_dom_sf"/>
</dbReference>
<dbReference type="InterPro" id="IPR033710">
    <property type="entry name" value="TBP_eukaryotic"/>
</dbReference>
<dbReference type="PANTHER" id="PTHR10126">
    <property type="entry name" value="TATA-BOX BINDING PROTEIN"/>
    <property type="match status" value="1"/>
</dbReference>
<dbReference type="Pfam" id="PF00352">
    <property type="entry name" value="TBP"/>
    <property type="match status" value="2"/>
</dbReference>
<dbReference type="PRINTS" id="PR00686">
    <property type="entry name" value="TIFACTORIID"/>
</dbReference>
<dbReference type="SUPFAM" id="SSF55945">
    <property type="entry name" value="TATA-box binding protein-like"/>
    <property type="match status" value="2"/>
</dbReference>
<dbReference type="PROSITE" id="PS00351">
    <property type="entry name" value="TFIID"/>
    <property type="match status" value="2"/>
</dbReference>
<name>TBPL2_XENLA</name>
<protein>
    <recommendedName>
        <fullName evidence="1">TATA box-binding protein-like 2</fullName>
        <shortName evidence="1">TBP-like 2</shortName>
    </recommendedName>
    <alternativeName>
        <fullName evidence="7">TATA box-binding protein-related factor 3</fullName>
        <shortName evidence="7">TBP-related factor 3</shortName>
    </alternativeName>
</protein>
<evidence type="ECO:0000250" key="1">
    <source>
        <dbReference type="UniProtKB" id="Q28DH2"/>
    </source>
</evidence>
<evidence type="ECO:0000255" key="2"/>
<evidence type="ECO:0000269" key="3">
    <source>
    </source>
</evidence>
<evidence type="ECO:0000269" key="4">
    <source>
    </source>
</evidence>
<evidence type="ECO:0000269" key="5">
    <source>
    </source>
</evidence>
<evidence type="ECO:0000269" key="6">
    <source>
    </source>
</evidence>
<evidence type="ECO:0000303" key="7">
    <source>
    </source>
</evidence>
<evidence type="ECO:0000303" key="8">
    <source>
    </source>
</evidence>
<evidence type="ECO:0000305" key="9"/>
<evidence type="ECO:0000312" key="10">
    <source>
        <dbReference type="EMBL" id="AAV34742.1"/>
    </source>
</evidence>
<evidence type="ECO:0000312" key="11">
    <source>
        <dbReference type="EMBL" id="DAA02137.1"/>
    </source>
</evidence>
<feature type="chain" id="PRO_0000349150" description="TATA box-binding protein-like 2">
    <location>
        <begin position="1"/>
        <end position="320"/>
    </location>
</feature>
<feature type="sequence conflict" description="In Ref. 3; BI349806." evidence="9" ref="3">
    <original>Q</original>
    <variation>H</variation>
    <location>
        <position position="145"/>
    </location>
</feature>
<feature type="sequence conflict" description="In Ref. 3; BI349806." evidence="9" ref="3">
    <original>I</original>
    <variation>N</variation>
    <location>
        <position position="164"/>
    </location>
</feature>
<feature type="sequence conflict" description="In Ref. 3; BI349806." evidence="9" ref="3">
    <original>I</original>
    <variation>N</variation>
    <location>
        <position position="185"/>
    </location>
</feature>
<feature type="sequence conflict" description="In Ref. 3; BI443085." evidence="9" ref="3">
    <original>S</original>
    <variation>N</variation>
    <location>
        <position position="262"/>
    </location>
</feature>
<proteinExistence type="evidence at transcript level"/>
<sequence length="320" mass="35709">MDGESSLERYLDQCDAEDVLASSHMFTPMTPYDDLAIQPLPGTSYSSTLEHSKELSTDFSSVDLSFLPDDLNQENEDQQEQTPSQSLEHDSGICLDASNLSQPFTPSECRDATQDSSNLCTMPITPMTPMTPMTPVAESSGIVPQLQNIVSTVNLACKLDLKKIALHARNAEYNPKRFAAVIMRIREPRTTALIFSSGKMVCTGAKSEEQSRLAARKYARVVQKLGFPAKFLDFKIQNMVGSCDVRFPIRLEGLVLTHQQFSSYEPELFPGLIYRMVKPRIVLLIFVSGKVVLTGAKERSEIYEAFENIYPILKGFKKTT</sequence>
<gene>
    <name evidence="1" type="primary">tbpl2</name>
    <name evidence="8" type="synonym">tbp2</name>
    <name evidence="11" type="synonym">trf3</name>
</gene>
<comment type="function">
    <text evidence="1 4 6">TATA box-binding transcription factor. Members of the TBP family are differentially required to regulate transcription and development during early embryogenesis. Required for gastrulation. Regulates a large subset of genes that are ventrally expressed. Binds to a subset of promoters.</text>
</comment>
<comment type="subcellular location">
    <subcellularLocation>
        <location evidence="4">Nucleus</location>
    </subcellularLocation>
</comment>
<comment type="tissue specificity">
    <text evidence="3 5">Expression is restricted to the gonads, and is higher in the ovary than the testis.</text>
</comment>
<comment type="developmental stage">
    <text evidence="4 5">Expressed both maternally and zygotically. Abundant in oocytes and expressed in embryos at a lower level, dropping between embryonic stages 6.5 and 12.</text>
</comment>
<comment type="similarity">
    <text evidence="2">Belongs to the TBP family.</text>
</comment>